<accession>Q144E7</accession>
<gene>
    <name evidence="1" type="primary">ureG</name>
    <name type="ordered locus">Bxeno_A0754</name>
    <name type="ORF">Bxe_A3697</name>
</gene>
<proteinExistence type="inferred from homology"/>
<organism>
    <name type="scientific">Paraburkholderia xenovorans (strain LB400)</name>
    <dbReference type="NCBI Taxonomy" id="266265"/>
    <lineage>
        <taxon>Bacteria</taxon>
        <taxon>Pseudomonadati</taxon>
        <taxon>Pseudomonadota</taxon>
        <taxon>Betaproteobacteria</taxon>
        <taxon>Burkholderiales</taxon>
        <taxon>Burkholderiaceae</taxon>
        <taxon>Paraburkholderia</taxon>
    </lineage>
</organism>
<dbReference type="EMBL" id="CP000270">
    <property type="protein sequence ID" value="ABE29292.1"/>
    <property type="molecule type" value="Genomic_DNA"/>
</dbReference>
<dbReference type="RefSeq" id="WP_007175995.1">
    <property type="nucleotide sequence ID" value="NC_007951.1"/>
</dbReference>
<dbReference type="SMR" id="Q144E7"/>
<dbReference type="STRING" id="266265.Bxe_A3697"/>
<dbReference type="KEGG" id="bxb:DR64_1389"/>
<dbReference type="KEGG" id="bxe:Bxe_A3697"/>
<dbReference type="eggNOG" id="COG0378">
    <property type="taxonomic scope" value="Bacteria"/>
</dbReference>
<dbReference type="OrthoDB" id="9802035at2"/>
<dbReference type="Proteomes" id="UP000001817">
    <property type="component" value="Chromosome 1"/>
</dbReference>
<dbReference type="GO" id="GO:0005737">
    <property type="term" value="C:cytoplasm"/>
    <property type="evidence" value="ECO:0007669"/>
    <property type="project" value="UniProtKB-SubCell"/>
</dbReference>
<dbReference type="GO" id="GO:0005525">
    <property type="term" value="F:GTP binding"/>
    <property type="evidence" value="ECO:0007669"/>
    <property type="project" value="UniProtKB-KW"/>
</dbReference>
<dbReference type="GO" id="GO:0003924">
    <property type="term" value="F:GTPase activity"/>
    <property type="evidence" value="ECO:0007669"/>
    <property type="project" value="InterPro"/>
</dbReference>
<dbReference type="GO" id="GO:0016151">
    <property type="term" value="F:nickel cation binding"/>
    <property type="evidence" value="ECO:0007669"/>
    <property type="project" value="UniProtKB-UniRule"/>
</dbReference>
<dbReference type="GO" id="GO:0043419">
    <property type="term" value="P:urea catabolic process"/>
    <property type="evidence" value="ECO:0007669"/>
    <property type="project" value="InterPro"/>
</dbReference>
<dbReference type="CDD" id="cd05540">
    <property type="entry name" value="UreG"/>
    <property type="match status" value="1"/>
</dbReference>
<dbReference type="FunFam" id="3.40.50.300:FF:000208">
    <property type="entry name" value="Urease accessory protein UreG"/>
    <property type="match status" value="1"/>
</dbReference>
<dbReference type="Gene3D" id="3.40.50.300">
    <property type="entry name" value="P-loop containing nucleotide triphosphate hydrolases"/>
    <property type="match status" value="1"/>
</dbReference>
<dbReference type="HAMAP" id="MF_01389">
    <property type="entry name" value="UreG"/>
    <property type="match status" value="1"/>
</dbReference>
<dbReference type="InterPro" id="IPR003495">
    <property type="entry name" value="CobW/HypB/UreG_nucleotide-bd"/>
</dbReference>
<dbReference type="InterPro" id="IPR027417">
    <property type="entry name" value="P-loop_NTPase"/>
</dbReference>
<dbReference type="InterPro" id="IPR004400">
    <property type="entry name" value="UreG"/>
</dbReference>
<dbReference type="NCBIfam" id="TIGR00101">
    <property type="entry name" value="ureG"/>
    <property type="match status" value="1"/>
</dbReference>
<dbReference type="PANTHER" id="PTHR31715">
    <property type="entry name" value="UREASE ACCESSORY PROTEIN G"/>
    <property type="match status" value="1"/>
</dbReference>
<dbReference type="PANTHER" id="PTHR31715:SF0">
    <property type="entry name" value="UREASE ACCESSORY PROTEIN G"/>
    <property type="match status" value="1"/>
</dbReference>
<dbReference type="Pfam" id="PF02492">
    <property type="entry name" value="cobW"/>
    <property type="match status" value="1"/>
</dbReference>
<dbReference type="PIRSF" id="PIRSF005624">
    <property type="entry name" value="Ni-bind_GTPase"/>
    <property type="match status" value="1"/>
</dbReference>
<dbReference type="SUPFAM" id="SSF52540">
    <property type="entry name" value="P-loop containing nucleoside triphosphate hydrolases"/>
    <property type="match status" value="1"/>
</dbReference>
<name>UREG_PARXL</name>
<feature type="chain" id="PRO_0000347382" description="Urease accessory protein UreG">
    <location>
        <begin position="1"/>
        <end position="217"/>
    </location>
</feature>
<feature type="region of interest" description="Disordered" evidence="2">
    <location>
        <begin position="1"/>
        <end position="24"/>
    </location>
</feature>
<feature type="compositionally biased region" description="Basic residues" evidence="2">
    <location>
        <begin position="1"/>
        <end position="18"/>
    </location>
</feature>
<feature type="binding site" evidence="1">
    <location>
        <begin position="26"/>
        <end position="33"/>
    </location>
    <ligand>
        <name>GTP</name>
        <dbReference type="ChEBI" id="CHEBI:37565"/>
    </ligand>
</feature>
<keyword id="KW-0143">Chaperone</keyword>
<keyword id="KW-0963">Cytoplasm</keyword>
<keyword id="KW-0342">GTP-binding</keyword>
<keyword id="KW-0996">Nickel insertion</keyword>
<keyword id="KW-0547">Nucleotide-binding</keyword>
<keyword id="KW-1185">Reference proteome</keyword>
<evidence type="ECO:0000255" key="1">
    <source>
        <dbReference type="HAMAP-Rule" id="MF_01389"/>
    </source>
</evidence>
<evidence type="ECO:0000256" key="2">
    <source>
        <dbReference type="SAM" id="MobiDB-lite"/>
    </source>
</evidence>
<reference key="1">
    <citation type="journal article" date="2006" name="Proc. Natl. Acad. Sci. U.S.A.">
        <title>Burkholderia xenovorans LB400 harbors a multi-replicon, 9.73-Mbp genome shaped for versatility.</title>
        <authorList>
            <person name="Chain P.S.G."/>
            <person name="Denef V.J."/>
            <person name="Konstantinidis K.T."/>
            <person name="Vergez L.M."/>
            <person name="Agullo L."/>
            <person name="Reyes V.L."/>
            <person name="Hauser L."/>
            <person name="Cordova M."/>
            <person name="Gomez L."/>
            <person name="Gonzalez M."/>
            <person name="Land M."/>
            <person name="Lao V."/>
            <person name="Larimer F."/>
            <person name="LiPuma J.J."/>
            <person name="Mahenthiralingam E."/>
            <person name="Malfatti S.A."/>
            <person name="Marx C.J."/>
            <person name="Parnell J.J."/>
            <person name="Ramette A."/>
            <person name="Richardson P."/>
            <person name="Seeger M."/>
            <person name="Smith D."/>
            <person name="Spilker T."/>
            <person name="Sul W.J."/>
            <person name="Tsoi T.V."/>
            <person name="Ulrich L.E."/>
            <person name="Zhulin I.B."/>
            <person name="Tiedje J.M."/>
        </authorList>
    </citation>
    <scope>NUCLEOTIDE SEQUENCE [LARGE SCALE GENOMIC DNA]</scope>
    <source>
        <strain>LB400</strain>
    </source>
</reference>
<sequence length="217" mass="23318">MNAPHHPAHSTVRTKKLPPLRVGVGGPVGSGKTTLLEMLCKAMREQYDLVAITNDIYTKEDQRLLTVAGALPAERIMGVETGGCPHTAIREDASINLEAVDRMLTRFPDADIVFIESGGDNLAATFSPELSDLTIYVIDVAGGEKIPRKGGPGITKSDLLVINKTDLAPMVGANLEVMAADAKKMRGERPFVMCNLKALDGLDVVVKFIEKKGLLKV</sequence>
<protein>
    <recommendedName>
        <fullName evidence="1">Urease accessory protein UreG</fullName>
    </recommendedName>
</protein>
<comment type="function">
    <text evidence="1">Facilitates the functional incorporation of the urease nickel metallocenter. This process requires GTP hydrolysis, probably effectuated by UreG.</text>
</comment>
<comment type="subunit">
    <text evidence="1">Homodimer. UreD, UreF and UreG form a complex that acts as a GTP-hydrolysis-dependent molecular chaperone, activating the urease apoprotein by helping to assemble the nickel containing metallocenter of UreC. The UreE protein probably delivers the nickel.</text>
</comment>
<comment type="subcellular location">
    <subcellularLocation>
        <location evidence="1">Cytoplasm</location>
    </subcellularLocation>
</comment>
<comment type="similarity">
    <text evidence="1">Belongs to the SIMIBI class G3E GTPase family. UreG subfamily.</text>
</comment>